<keyword id="KW-0002">3D-structure</keyword>
<keyword id="KW-0574">Periplasm</keyword>
<keyword id="KW-1185">Reference proteome</keyword>
<keyword id="KW-0732">Signal</keyword>
<keyword id="KW-0813">Transport</keyword>
<protein>
    <recommendedName>
        <fullName evidence="5">Isethionate-binding periplasmic protein DctP</fullName>
    </recommendedName>
    <alternativeName>
        <fullName evidence="3">TRAP transporter, DctP solute-binding subunit</fullName>
    </alternativeName>
</protein>
<proteinExistence type="evidence at protein level"/>
<name>DCTP_OLEA2</name>
<dbReference type="EMBL" id="CP000112">
    <property type="protein sequence ID" value="ABB38076.1"/>
    <property type="molecule type" value="Genomic_DNA"/>
</dbReference>
<dbReference type="RefSeq" id="WP_011367274.1">
    <property type="nucleotide sequence ID" value="NC_007519.1"/>
</dbReference>
<dbReference type="PDB" id="8T9T">
    <property type="method" value="X-ray"/>
    <property type="resolution" value="1.48 A"/>
    <property type="chains" value="A=1-336"/>
</dbReference>
<dbReference type="PDB" id="8TE9">
    <property type="method" value="X-ray"/>
    <property type="resolution" value="1.25 A"/>
    <property type="chains" value="A/B=1-336"/>
</dbReference>
<dbReference type="PDB" id="8TQN">
    <property type="method" value="X-ray"/>
    <property type="resolution" value="1.65 A"/>
    <property type="chains" value="A=1-336"/>
</dbReference>
<dbReference type="PDB" id="8TRP">
    <property type="method" value="X-ray"/>
    <property type="resolution" value="1.89 A"/>
    <property type="chains" value="A=1-336"/>
</dbReference>
<dbReference type="PDBsum" id="8T9T"/>
<dbReference type="PDBsum" id="8TE9"/>
<dbReference type="PDBsum" id="8TQN"/>
<dbReference type="PDBsum" id="8TRP"/>
<dbReference type="SMR" id="Q312S0"/>
<dbReference type="STRING" id="207559.Dde_1275"/>
<dbReference type="KEGG" id="dde:Dde_1275"/>
<dbReference type="eggNOG" id="COG1638">
    <property type="taxonomic scope" value="Bacteria"/>
</dbReference>
<dbReference type="HOGENOM" id="CLU_036176_1_3_7"/>
<dbReference type="UniPathway" id="UPA00338"/>
<dbReference type="Proteomes" id="UP000002710">
    <property type="component" value="Chromosome"/>
</dbReference>
<dbReference type="GO" id="GO:0030288">
    <property type="term" value="C:outer membrane-bounded periplasmic space"/>
    <property type="evidence" value="ECO:0007669"/>
    <property type="project" value="InterPro"/>
</dbReference>
<dbReference type="GO" id="GO:0046306">
    <property type="term" value="P:alkanesulfonate catabolic process"/>
    <property type="evidence" value="ECO:0007669"/>
    <property type="project" value="UniProtKB-UniPathway"/>
</dbReference>
<dbReference type="GO" id="GO:0055085">
    <property type="term" value="P:transmembrane transport"/>
    <property type="evidence" value="ECO:0007669"/>
    <property type="project" value="InterPro"/>
</dbReference>
<dbReference type="CDD" id="cd13603">
    <property type="entry name" value="PBP2_TRAP_Siap_TeaA_like"/>
    <property type="match status" value="1"/>
</dbReference>
<dbReference type="Gene3D" id="3.40.190.170">
    <property type="entry name" value="Bacterial extracellular solute-binding protein, family 7"/>
    <property type="match status" value="1"/>
</dbReference>
<dbReference type="InterPro" id="IPR018389">
    <property type="entry name" value="DctP_fam"/>
</dbReference>
<dbReference type="InterPro" id="IPR004682">
    <property type="entry name" value="TRAP_DctP"/>
</dbReference>
<dbReference type="InterPro" id="IPR038404">
    <property type="entry name" value="TRAP_DctP_sf"/>
</dbReference>
<dbReference type="NCBIfam" id="TIGR00787">
    <property type="entry name" value="dctP"/>
    <property type="match status" value="1"/>
</dbReference>
<dbReference type="NCBIfam" id="NF037995">
    <property type="entry name" value="TRAP_S1"/>
    <property type="match status" value="1"/>
</dbReference>
<dbReference type="PANTHER" id="PTHR33376">
    <property type="match status" value="1"/>
</dbReference>
<dbReference type="PANTHER" id="PTHR33376:SF7">
    <property type="entry name" value="C4-DICARBOXYLATE-BINDING PROTEIN DCTB"/>
    <property type="match status" value="1"/>
</dbReference>
<dbReference type="Pfam" id="PF03480">
    <property type="entry name" value="DctP"/>
    <property type="match status" value="1"/>
</dbReference>
<dbReference type="PIRSF" id="PIRSF006470">
    <property type="entry name" value="DctB"/>
    <property type="match status" value="1"/>
</dbReference>
<dbReference type="SUPFAM" id="SSF53850">
    <property type="entry name" value="Periplasmic binding protein-like II"/>
    <property type="match status" value="1"/>
</dbReference>
<evidence type="ECO:0000255" key="1"/>
<evidence type="ECO:0000269" key="2">
    <source>
    </source>
</evidence>
<evidence type="ECO:0000303" key="3">
    <source>
    </source>
</evidence>
<evidence type="ECO:0000305" key="4"/>
<evidence type="ECO:0000305" key="5">
    <source>
    </source>
</evidence>
<evidence type="ECO:0000312" key="6">
    <source>
        <dbReference type="EMBL" id="ABB38076.1"/>
    </source>
</evidence>
<evidence type="ECO:0007829" key="7">
    <source>
        <dbReference type="PDB" id="8TE9"/>
    </source>
</evidence>
<reference key="1">
    <citation type="journal article" date="2011" name="J. Bacteriol.">
        <title>Complete genome sequence and updated annotation of Desulfovibrio alaskensis G20.</title>
        <authorList>
            <person name="Hauser L.J."/>
            <person name="Land M.L."/>
            <person name="Brown S.D."/>
            <person name="Larimer F."/>
            <person name="Keller K.L."/>
            <person name="Rapp-Giles B.J."/>
            <person name="Price M.N."/>
            <person name="Lin M."/>
            <person name="Bruce D.C."/>
            <person name="Detter J.C."/>
            <person name="Tapia R."/>
            <person name="Han C.S."/>
            <person name="Goodwin L.A."/>
            <person name="Cheng J.F."/>
            <person name="Pitluck S."/>
            <person name="Copeland A."/>
            <person name="Lucas S."/>
            <person name="Nolan M."/>
            <person name="Lapidus A.L."/>
            <person name="Palumbo A.V."/>
            <person name="Wall J.D."/>
        </authorList>
    </citation>
    <scope>NUCLEOTIDE SEQUENCE [LARGE SCALE GENOMIC DNA]</scope>
    <source>
        <strain>ATCC BAA-1058 / DSM 17464 / G20</strain>
    </source>
</reference>
<reference key="2">
    <citation type="journal article" date="2019" name="Proc. Natl. Acad. Sci. U.S.A.">
        <title>A glycyl radical enzyme enables hydrogen sulfide production by the human intestinal bacterium Bilophila wadsworthia.</title>
        <authorList>
            <person name="Peck S.C."/>
            <person name="Denger K."/>
            <person name="Burrichter A."/>
            <person name="Irwin S.M."/>
            <person name="Balskus E.P."/>
            <person name="Schleheck D."/>
        </authorList>
    </citation>
    <scope>FUNCTION</scope>
    <scope>INDUCTION</scope>
    <scope>PATHWAY</scope>
    <scope>DISRUPTION PHENOTYPE</scope>
    <scope>SUBUNIT</scope>
    <source>
        <strain>ATCC BAA-1058 / DSM 17464 / G20</strain>
    </source>
</reference>
<feature type="signal peptide" evidence="1">
    <location>
        <begin position="1"/>
        <end position="23"/>
    </location>
</feature>
<feature type="chain" id="PRO_5004220098" description="Isethionate-binding periplasmic protein DctP">
    <location>
        <begin position="24"/>
        <end position="336"/>
    </location>
</feature>
<feature type="strand" evidence="7">
    <location>
        <begin position="31"/>
        <end position="36"/>
    </location>
</feature>
<feature type="helix" evidence="7">
    <location>
        <begin position="44"/>
        <end position="59"/>
    </location>
</feature>
<feature type="turn" evidence="7">
    <location>
        <begin position="60"/>
        <end position="62"/>
    </location>
</feature>
<feature type="strand" evidence="7">
    <location>
        <begin position="63"/>
        <end position="69"/>
    </location>
</feature>
<feature type="turn" evidence="7">
    <location>
        <begin position="71"/>
        <end position="74"/>
    </location>
</feature>
<feature type="helix" evidence="7">
    <location>
        <begin position="77"/>
        <end position="86"/>
    </location>
</feature>
<feature type="strand" evidence="7">
    <location>
        <begin position="88"/>
        <end position="95"/>
    </location>
</feature>
<feature type="helix" evidence="7">
    <location>
        <begin position="97"/>
        <end position="101"/>
    </location>
</feature>
<feature type="helix" evidence="7">
    <location>
        <begin position="104"/>
        <end position="110"/>
    </location>
</feature>
<feature type="helix" evidence="7">
    <location>
        <begin position="117"/>
        <end position="119"/>
    </location>
</feature>
<feature type="helix" evidence="7">
    <location>
        <begin position="120"/>
        <end position="129"/>
    </location>
</feature>
<feature type="helix" evidence="7">
    <location>
        <begin position="131"/>
        <end position="142"/>
    </location>
</feature>
<feature type="strand" evidence="7">
    <location>
        <begin position="145"/>
        <end position="163"/>
    </location>
</feature>
<feature type="helix" evidence="7">
    <location>
        <begin position="168"/>
        <end position="171"/>
    </location>
</feature>
<feature type="strand" evidence="7">
    <location>
        <begin position="175"/>
        <end position="178"/>
    </location>
</feature>
<feature type="helix" evidence="7">
    <location>
        <begin position="182"/>
        <end position="190"/>
    </location>
</feature>
<feature type="strand" evidence="7">
    <location>
        <begin position="194"/>
        <end position="197"/>
    </location>
</feature>
<feature type="helix" evidence="7">
    <location>
        <begin position="200"/>
        <end position="208"/>
    </location>
</feature>
<feature type="strand" evidence="7">
    <location>
        <begin position="213"/>
        <end position="217"/>
    </location>
</feature>
<feature type="helix" evidence="7">
    <location>
        <begin position="219"/>
        <end position="224"/>
    </location>
</feature>
<feature type="turn" evidence="7">
    <location>
        <begin position="228"/>
        <end position="230"/>
    </location>
</feature>
<feature type="strand" evidence="7">
    <location>
        <begin position="233"/>
        <end position="235"/>
    </location>
</feature>
<feature type="strand" evidence="7">
    <location>
        <begin position="240"/>
        <end position="249"/>
    </location>
</feature>
<feature type="helix" evidence="7">
    <location>
        <begin position="250"/>
        <end position="255"/>
    </location>
</feature>
<feature type="helix" evidence="7">
    <location>
        <begin position="258"/>
        <end position="292"/>
    </location>
</feature>
<feature type="strand" evidence="7">
    <location>
        <begin position="296"/>
        <end position="298"/>
    </location>
</feature>
<feature type="helix" evidence="7">
    <location>
        <begin position="302"/>
        <end position="312"/>
    </location>
</feature>
<feature type="helix" evidence="7">
    <location>
        <begin position="314"/>
        <end position="318"/>
    </location>
</feature>
<feature type="turn" evidence="7">
    <location>
        <begin position="319"/>
        <end position="322"/>
    </location>
</feature>
<feature type="helix" evidence="7">
    <location>
        <begin position="325"/>
        <end position="333"/>
    </location>
</feature>
<sequence length="336" mass="37241">MKHLLKAGALVALACIVTLTAGAQAHAAKRINIRLAHPMAPGNNVTVGYEKFKELVAEKSNGRVRIQLFGNCMLGSDRVTMEAAQRGTLEMASSSSPNMANFSKQWMVFDLPYITSPEHQQKLYKAIDDGELGKKLDEIAASIGLKPIMYSEYGYRNFVTTKKPIKTADDLKNLKVRTTDSPIEVAVAAALGMAPTPISWGETYTALQQGTVDGEGNTFSLLNDAKHTEVLKYAIDSAHNYSMHLLMMNKAYYDSLPANVQQILTEAGREALTYQRSITSELEKKAEDAFIEQGITVTRLSPEERAKLVERTRPVWDKFKDDIPAELIKLVQETQQ</sequence>
<comment type="function">
    <text evidence="2">Part of the tripartite ATP-independent periplasmic (TRAP) transport system DctPQM involved in the uptake of isethionate (2-hydroxyethanesulfonate), which is then catabolized by enzymes encoded by adjacent genes in the locus. The DctP subunit is the solute-binding protein. Thereby is involved in an anaerobic respiration pathway that converts the sulfonate isethionate to ammonia, acetate and sulfide.</text>
</comment>
<comment type="catalytic activity">
    <reaction evidence="2">
        <text>2-hydroxyethane-1-sulfonate(out) + Na(+)(out) = 2-hydroxyethane-1-sulfonate(in) + Na(+)(in)</text>
        <dbReference type="Rhea" id="RHEA:64584"/>
        <dbReference type="ChEBI" id="CHEBI:29101"/>
        <dbReference type="ChEBI" id="CHEBI:61904"/>
    </reaction>
    <physiologicalReaction direction="left-to-right" evidence="2">
        <dbReference type="Rhea" id="RHEA:64585"/>
    </physiologicalReaction>
</comment>
<comment type="pathway">
    <text evidence="2">Organosulfur degradation; alkanesulfonate degradation.</text>
</comment>
<comment type="subunit">
    <text evidence="5">The complex comprises the periplasmic solute receptor protein DctP, and the fused transmembrane protein DctMQ.</text>
</comment>
<comment type="subcellular location">
    <subcellularLocation>
        <location evidence="4">Periplasm</location>
    </subcellularLocation>
</comment>
<comment type="induction">
    <text evidence="2">Highly up-regulated in the presence of isethionate.</text>
</comment>
<comment type="disruption phenotype">
    <text evidence="2">Cells lacking this gene lose the ability to grow with isethionate as the terminal electron acceptor.</text>
</comment>
<comment type="similarity">
    <text evidence="4">Belongs to the bacterial solute-binding protein 7 family.</text>
</comment>
<accession>Q312S0</accession>
<organism>
    <name type="scientific">Oleidesulfovibrio alaskensis (strain ATCC BAA-1058 / DSM 17464 / G20)</name>
    <name type="common">Desulfovibrio alaskensis</name>
    <dbReference type="NCBI Taxonomy" id="207559"/>
    <lineage>
        <taxon>Bacteria</taxon>
        <taxon>Pseudomonadati</taxon>
        <taxon>Thermodesulfobacteriota</taxon>
        <taxon>Desulfovibrionia</taxon>
        <taxon>Desulfovibrionales</taxon>
        <taxon>Desulfovibrionaceae</taxon>
        <taxon>Oleidesulfovibrio</taxon>
    </lineage>
</organism>
<gene>
    <name evidence="3" type="primary">dctP</name>
    <name evidence="6" type="ordered locus">Dde_1275</name>
</gene>